<evidence type="ECO:0000250" key="1"/>
<evidence type="ECO:0000255" key="2"/>
<evidence type="ECO:0000305" key="3"/>
<comment type="function">
    <text evidence="1">Activates acetate so that it can be used for lipid synthesis or for energy generation.</text>
</comment>
<comment type="catalytic activity">
    <reaction>
        <text>acetate + ATP + CoA = acetyl-CoA + AMP + diphosphate</text>
        <dbReference type="Rhea" id="RHEA:23176"/>
        <dbReference type="ChEBI" id="CHEBI:30089"/>
        <dbReference type="ChEBI" id="CHEBI:30616"/>
        <dbReference type="ChEBI" id="CHEBI:33019"/>
        <dbReference type="ChEBI" id="CHEBI:57287"/>
        <dbReference type="ChEBI" id="CHEBI:57288"/>
        <dbReference type="ChEBI" id="CHEBI:456215"/>
        <dbReference type="EC" id="6.2.1.1"/>
    </reaction>
</comment>
<comment type="subcellular location">
    <subcellularLocation>
        <location evidence="3">Mitochondrion</location>
    </subcellularLocation>
</comment>
<comment type="similarity">
    <text evidence="3">Belongs to the ATP-dependent AMP-binding enzyme family.</text>
</comment>
<feature type="transit peptide" description="Mitochondrion" evidence="2">
    <location>
        <begin position="1"/>
        <end status="unknown"/>
    </location>
</feature>
<feature type="chain" id="PRO_0000327600" description="Acyl-CoA synthetase short-chain family member B, mitochondrial">
    <location>
        <begin status="unknown"/>
        <end position="688"/>
    </location>
</feature>
<organism>
    <name type="scientific">Dictyostelium discoideum</name>
    <name type="common">Social amoeba</name>
    <dbReference type="NCBI Taxonomy" id="44689"/>
    <lineage>
        <taxon>Eukaryota</taxon>
        <taxon>Amoebozoa</taxon>
        <taxon>Evosea</taxon>
        <taxon>Eumycetozoa</taxon>
        <taxon>Dictyostelia</taxon>
        <taxon>Dictyosteliales</taxon>
        <taxon>Dictyosteliaceae</taxon>
        <taxon>Dictyostelium</taxon>
    </lineage>
</organism>
<reference key="1">
    <citation type="journal article" date="2002" name="Nature">
        <title>Sequence and analysis of chromosome 2 of Dictyostelium discoideum.</title>
        <authorList>
            <person name="Gloeckner G."/>
            <person name="Eichinger L."/>
            <person name="Szafranski K."/>
            <person name="Pachebat J.A."/>
            <person name="Bankier A.T."/>
            <person name="Dear P.H."/>
            <person name="Lehmann R."/>
            <person name="Baumgart C."/>
            <person name="Parra G."/>
            <person name="Abril J.F."/>
            <person name="Guigo R."/>
            <person name="Kumpf K."/>
            <person name="Tunggal B."/>
            <person name="Cox E.C."/>
            <person name="Quail M.A."/>
            <person name="Platzer M."/>
            <person name="Rosenthal A."/>
            <person name="Noegel A.A."/>
        </authorList>
    </citation>
    <scope>NUCLEOTIDE SEQUENCE [LARGE SCALE GENOMIC DNA]</scope>
    <source>
        <strain>AX4</strain>
    </source>
</reference>
<reference key="2">
    <citation type="journal article" date="2005" name="Nature">
        <title>The genome of the social amoeba Dictyostelium discoideum.</title>
        <authorList>
            <person name="Eichinger L."/>
            <person name="Pachebat J.A."/>
            <person name="Gloeckner G."/>
            <person name="Rajandream M.A."/>
            <person name="Sucgang R."/>
            <person name="Berriman M."/>
            <person name="Song J."/>
            <person name="Olsen R."/>
            <person name="Szafranski K."/>
            <person name="Xu Q."/>
            <person name="Tunggal B."/>
            <person name="Kummerfeld S."/>
            <person name="Madera M."/>
            <person name="Konfortov B.A."/>
            <person name="Rivero F."/>
            <person name="Bankier A.T."/>
            <person name="Lehmann R."/>
            <person name="Hamlin N."/>
            <person name="Davies R."/>
            <person name="Gaudet P."/>
            <person name="Fey P."/>
            <person name="Pilcher K."/>
            <person name="Chen G."/>
            <person name="Saunders D."/>
            <person name="Sodergren E.J."/>
            <person name="Davis P."/>
            <person name="Kerhornou A."/>
            <person name="Nie X."/>
            <person name="Hall N."/>
            <person name="Anjard C."/>
            <person name="Hemphill L."/>
            <person name="Bason N."/>
            <person name="Farbrother P."/>
            <person name="Desany B."/>
            <person name="Just E."/>
            <person name="Morio T."/>
            <person name="Rost R."/>
            <person name="Churcher C.M."/>
            <person name="Cooper J."/>
            <person name="Haydock S."/>
            <person name="van Driessche N."/>
            <person name="Cronin A."/>
            <person name="Goodhead I."/>
            <person name="Muzny D.M."/>
            <person name="Mourier T."/>
            <person name="Pain A."/>
            <person name="Lu M."/>
            <person name="Harper D."/>
            <person name="Lindsay R."/>
            <person name="Hauser H."/>
            <person name="James K.D."/>
            <person name="Quiles M."/>
            <person name="Madan Babu M."/>
            <person name="Saito T."/>
            <person name="Buchrieser C."/>
            <person name="Wardroper A."/>
            <person name="Felder M."/>
            <person name="Thangavelu M."/>
            <person name="Johnson D."/>
            <person name="Knights A."/>
            <person name="Loulseged H."/>
            <person name="Mungall K.L."/>
            <person name="Oliver K."/>
            <person name="Price C."/>
            <person name="Quail M.A."/>
            <person name="Urushihara H."/>
            <person name="Hernandez J."/>
            <person name="Rabbinowitsch E."/>
            <person name="Steffen D."/>
            <person name="Sanders M."/>
            <person name="Ma J."/>
            <person name="Kohara Y."/>
            <person name="Sharp S."/>
            <person name="Simmonds M.N."/>
            <person name="Spiegler S."/>
            <person name="Tivey A."/>
            <person name="Sugano S."/>
            <person name="White B."/>
            <person name="Walker D."/>
            <person name="Woodward J.R."/>
            <person name="Winckler T."/>
            <person name="Tanaka Y."/>
            <person name="Shaulsky G."/>
            <person name="Schleicher M."/>
            <person name="Weinstock G.M."/>
            <person name="Rosenthal A."/>
            <person name="Cox E.C."/>
            <person name="Chisholm R.L."/>
            <person name="Gibbs R.A."/>
            <person name="Loomis W.F."/>
            <person name="Platzer M."/>
            <person name="Kay R.R."/>
            <person name="Williams J.G."/>
            <person name="Dear P.H."/>
            <person name="Noegel A.A."/>
            <person name="Barrell B.G."/>
            <person name="Kuspa A."/>
        </authorList>
    </citation>
    <scope>NUCLEOTIDE SEQUENCE [LARGE SCALE GENOMIC DNA]</scope>
    <source>
        <strain>AX4</strain>
    </source>
</reference>
<name>ACSB_DICDI</name>
<protein>
    <recommendedName>
        <fullName>Acyl-CoA synthetase short-chain family member B, mitochondrial</fullName>
        <ecNumber>6.2.1.1</ecNumber>
    </recommendedName>
</protein>
<dbReference type="EC" id="6.2.1.1"/>
<dbReference type="EMBL" id="AAFI02000012">
    <property type="protein sequence ID" value="EAL70362.1"/>
    <property type="molecule type" value="Genomic_DNA"/>
</dbReference>
<dbReference type="RefSeq" id="XP_644178.1">
    <property type="nucleotide sequence ID" value="XM_639086.1"/>
</dbReference>
<dbReference type="SMR" id="Q554Z5"/>
<dbReference type="FunCoup" id="Q554Z5">
    <property type="interactions" value="32"/>
</dbReference>
<dbReference type="STRING" id="44689.Q554Z5"/>
<dbReference type="PaxDb" id="44689-DDB0231689"/>
<dbReference type="EnsemblProtists" id="EAL70362">
    <property type="protein sequence ID" value="EAL70362"/>
    <property type="gene ID" value="DDB_G0274939"/>
</dbReference>
<dbReference type="GeneID" id="8619607"/>
<dbReference type="KEGG" id="ddi:DDB_G0274939"/>
<dbReference type="dictyBase" id="DDB_G0274939">
    <property type="gene designation" value="aslB"/>
</dbReference>
<dbReference type="VEuPathDB" id="AmoebaDB:DDB_G0274939"/>
<dbReference type="eggNOG" id="KOG1175">
    <property type="taxonomic scope" value="Eukaryota"/>
</dbReference>
<dbReference type="HOGENOM" id="CLU_000022_3_5_1"/>
<dbReference type="InParanoid" id="Q554Z5"/>
<dbReference type="OMA" id="FIMGRTD"/>
<dbReference type="PhylomeDB" id="Q554Z5"/>
<dbReference type="Reactome" id="R-DDI-77111">
    <property type="pathway name" value="Synthesis of Ketone Bodies"/>
</dbReference>
<dbReference type="PRO" id="PR:Q554Z5"/>
<dbReference type="Proteomes" id="UP000002195">
    <property type="component" value="Chromosome 2"/>
</dbReference>
<dbReference type="GO" id="GO:0005739">
    <property type="term" value="C:mitochondrion"/>
    <property type="evidence" value="ECO:0007669"/>
    <property type="project" value="UniProtKB-SubCell"/>
</dbReference>
<dbReference type="GO" id="GO:0003987">
    <property type="term" value="F:acetate-CoA ligase activity"/>
    <property type="evidence" value="ECO:0000250"/>
    <property type="project" value="UniProtKB"/>
</dbReference>
<dbReference type="GO" id="GO:0005524">
    <property type="term" value="F:ATP binding"/>
    <property type="evidence" value="ECO:0007669"/>
    <property type="project" value="UniProtKB-KW"/>
</dbReference>
<dbReference type="GO" id="GO:0050218">
    <property type="term" value="F:propionate-CoA ligase activity"/>
    <property type="evidence" value="ECO:0000318"/>
    <property type="project" value="GO_Central"/>
</dbReference>
<dbReference type="GO" id="GO:0008610">
    <property type="term" value="P:lipid biosynthetic process"/>
    <property type="evidence" value="ECO:0000250"/>
    <property type="project" value="UniProtKB"/>
</dbReference>
<dbReference type="CDD" id="cd05967">
    <property type="entry name" value="PrpE"/>
    <property type="match status" value="1"/>
</dbReference>
<dbReference type="FunFam" id="3.40.50.12780:FF:000001">
    <property type="entry name" value="Acetyl-coenzyme A synthetase"/>
    <property type="match status" value="1"/>
</dbReference>
<dbReference type="FunFam" id="3.30.300.30:FF:000017">
    <property type="entry name" value="Acyl-CoA synthetase short-chain family member 3"/>
    <property type="match status" value="1"/>
</dbReference>
<dbReference type="Gene3D" id="3.30.300.30">
    <property type="match status" value="1"/>
</dbReference>
<dbReference type="Gene3D" id="3.40.50.12780">
    <property type="entry name" value="N-terminal domain of ligase-like"/>
    <property type="match status" value="1"/>
</dbReference>
<dbReference type="InterPro" id="IPR032387">
    <property type="entry name" value="ACAS_N"/>
</dbReference>
<dbReference type="InterPro" id="IPR025110">
    <property type="entry name" value="AMP-bd_C"/>
</dbReference>
<dbReference type="InterPro" id="IPR045851">
    <property type="entry name" value="AMP-bd_C_sf"/>
</dbReference>
<dbReference type="InterPro" id="IPR020845">
    <property type="entry name" value="AMP-binding_CS"/>
</dbReference>
<dbReference type="InterPro" id="IPR000873">
    <property type="entry name" value="AMP-dep_synth/lig_dom"/>
</dbReference>
<dbReference type="InterPro" id="IPR042099">
    <property type="entry name" value="ANL_N_sf"/>
</dbReference>
<dbReference type="PANTHER" id="PTHR43347">
    <property type="entry name" value="ACYL-COA SYNTHETASE"/>
    <property type="match status" value="1"/>
</dbReference>
<dbReference type="PANTHER" id="PTHR43347:SF3">
    <property type="entry name" value="ACYL-COA SYNTHETASE SHORT-CHAIN FAMILY MEMBER 3, MITOCHONDRIAL"/>
    <property type="match status" value="1"/>
</dbReference>
<dbReference type="Pfam" id="PF16177">
    <property type="entry name" value="ACAS_N"/>
    <property type="match status" value="1"/>
</dbReference>
<dbReference type="Pfam" id="PF00501">
    <property type="entry name" value="AMP-binding"/>
    <property type="match status" value="1"/>
</dbReference>
<dbReference type="Pfam" id="PF13193">
    <property type="entry name" value="AMP-binding_C"/>
    <property type="match status" value="1"/>
</dbReference>
<dbReference type="SUPFAM" id="SSF56801">
    <property type="entry name" value="Acetyl-CoA synthetase-like"/>
    <property type="match status" value="1"/>
</dbReference>
<dbReference type="PROSITE" id="PS00455">
    <property type="entry name" value="AMP_BINDING"/>
    <property type="match status" value="1"/>
</dbReference>
<proteinExistence type="inferred from homology"/>
<accession>Q554Z5</accession>
<accession>Q869S4</accession>
<keyword id="KW-0067">ATP-binding</keyword>
<keyword id="KW-0436">Ligase</keyword>
<keyword id="KW-0496">Mitochondrion</keyword>
<keyword id="KW-0547">Nucleotide-binding</keyword>
<keyword id="KW-1185">Reference proteome</keyword>
<keyword id="KW-0809">Transit peptide</keyword>
<gene>
    <name type="primary">aslB</name>
    <name type="ORF">DDB_G0274939</name>
</gene>
<sequence length="688" mass="77120">MFSNGLSKLIKSKIASTSIITTKNNYSISKLSFSSTSILLNKKYKLSEPFNYEQDCEYALKEPIQFWDEVASKYVHWNKRYEKVYSGDEYNPEWFKGGVLNACYNALDVHAKDPITKNRIAIIHETPSKNNTNKLTYGELWDEVCIFARGLHNLGVEKGDRVVIYMPMINQALIAMLACARLGATHSVVFGGFASPQLAQRIEHFKPKVVISANFGVEGHKINCYTPLLSKALELSSHKPNHTIVYNRLDVKLDAGEVLPPRVEGSLDWSELIKNIAPYRDYALVDSTHPLYILYTSGTTGMPKGVVRDTGGYSVALNYSIRNCYGMKSGDTFFAGSDVGWVVGHTLSVYGPLMVGLTSIIFEGKPTVPDASTYWKLIEKHRVNALFSAPTAIRAIHRDDADGKLASKCDLSSLRSIWLGGERLDSSTFNFLRNITNNKPILDNYWNTESGSPLITNPSCQVPIKANATGKPMPGYQFHVLSPTSERLGADKIGEVCIKLPVAPGFTNTLYLNPEGYKNAYLNEYPGYLRTADSGYYDENGYYHIISRVDDIINVSGHRLSTGSIEEILVKHPKIVECAVIGVHDELKGEIPFGLVVLKPQYKDCAEEVENELIKEVRENIGPVATFKKVLSVNRLPKTRSGKILRNILRKMYNKEEYTVPPTIEDMEVLKEIDIEFEKYKLSHPPKK</sequence>